<reference key="1">
    <citation type="journal article" date="2006" name="J. Bacteriol.">
        <title>Pathogenomic sequence analysis of Bacillus cereus and Bacillus thuringiensis isolates closely related to Bacillus anthracis.</title>
        <authorList>
            <person name="Han C.S."/>
            <person name="Xie G."/>
            <person name="Challacombe J.F."/>
            <person name="Altherr M.R."/>
            <person name="Bhotika S.S."/>
            <person name="Bruce D."/>
            <person name="Campbell C.S."/>
            <person name="Campbell M.L."/>
            <person name="Chen J."/>
            <person name="Chertkov O."/>
            <person name="Cleland C."/>
            <person name="Dimitrijevic M."/>
            <person name="Doggett N.A."/>
            <person name="Fawcett J.J."/>
            <person name="Glavina T."/>
            <person name="Goodwin L.A."/>
            <person name="Hill K.K."/>
            <person name="Hitchcock P."/>
            <person name="Jackson P.J."/>
            <person name="Keim P."/>
            <person name="Kewalramani A.R."/>
            <person name="Longmire J."/>
            <person name="Lucas S."/>
            <person name="Malfatti S."/>
            <person name="McMurry K."/>
            <person name="Meincke L.J."/>
            <person name="Misra M."/>
            <person name="Moseman B.L."/>
            <person name="Mundt M."/>
            <person name="Munk A.C."/>
            <person name="Okinaka R.T."/>
            <person name="Parson-Quintana B."/>
            <person name="Reilly L.P."/>
            <person name="Richardson P."/>
            <person name="Robinson D.L."/>
            <person name="Rubin E."/>
            <person name="Saunders E."/>
            <person name="Tapia R."/>
            <person name="Tesmer J.G."/>
            <person name="Thayer N."/>
            <person name="Thompson L.S."/>
            <person name="Tice H."/>
            <person name="Ticknor L.O."/>
            <person name="Wills P.L."/>
            <person name="Brettin T.S."/>
            <person name="Gilna P."/>
        </authorList>
    </citation>
    <scope>NUCLEOTIDE SEQUENCE [LARGE SCALE GENOMIC DNA]</scope>
    <source>
        <strain>ZK / E33L</strain>
    </source>
</reference>
<name>PURQ_BACCZ</name>
<sequence length="227" mass="25411">MKFAVIVFPGSNCDVDMFHAIKDELGEEVDYVWHDTENLDEYDAILLPGGFSYGDYLRCGAISRFANAMKAVQKAAEQGKPILGVCNGFQILVESGLLPGALMRNENLKFMCRTVQLRVENNETMFTSQYEKDEVINIPIAHGEGNYYCDEETLKKLEENNQIAFRYVENPNGSVSDIAGIVNEKGNVLGMMPHPERAVDELLGGAEGLKVFQSILKQWRETYVVNA</sequence>
<gene>
    <name evidence="1" type="primary">purQ</name>
    <name type="ordered locus">BCE33L0268</name>
</gene>
<accession>Q63GT4</accession>
<feature type="chain" id="PRO_0000100534" description="Phosphoribosylformylglycinamidine synthase subunit PurQ">
    <location>
        <begin position="1"/>
        <end position="227"/>
    </location>
</feature>
<feature type="domain" description="Glutamine amidotransferase type-1" evidence="1">
    <location>
        <begin position="3"/>
        <end position="225"/>
    </location>
</feature>
<feature type="active site" description="Nucleophile" evidence="1">
    <location>
        <position position="86"/>
    </location>
</feature>
<feature type="active site" evidence="1">
    <location>
        <position position="194"/>
    </location>
</feature>
<feature type="active site" evidence="1">
    <location>
        <position position="196"/>
    </location>
</feature>
<protein>
    <recommendedName>
        <fullName evidence="1">Phosphoribosylformylglycinamidine synthase subunit PurQ</fullName>
        <shortName evidence="1">FGAM synthase</shortName>
        <ecNumber evidence="1">6.3.5.3</ecNumber>
    </recommendedName>
    <alternativeName>
        <fullName evidence="1">Formylglycinamide ribonucleotide amidotransferase subunit I</fullName>
        <shortName evidence="1">FGAR amidotransferase I</shortName>
        <shortName evidence="1">FGAR-AT I</shortName>
    </alternativeName>
    <alternativeName>
        <fullName evidence="1">Glutaminase PurQ</fullName>
        <ecNumber evidence="1">3.5.1.2</ecNumber>
    </alternativeName>
    <alternativeName>
        <fullName evidence="1">Phosphoribosylformylglycinamidine synthase subunit I</fullName>
    </alternativeName>
</protein>
<proteinExistence type="inferred from homology"/>
<dbReference type="EC" id="6.3.5.3" evidence="1"/>
<dbReference type="EC" id="3.5.1.2" evidence="1"/>
<dbReference type="EMBL" id="CP000001">
    <property type="protein sequence ID" value="AAU19970.1"/>
    <property type="molecule type" value="Genomic_DNA"/>
</dbReference>
<dbReference type="RefSeq" id="WP_000666778.1">
    <property type="nucleotide sequence ID" value="NZ_CP009968.1"/>
</dbReference>
<dbReference type="SMR" id="Q63GT4"/>
<dbReference type="GeneID" id="75083604"/>
<dbReference type="KEGG" id="bcz:BCE33L0268"/>
<dbReference type="PATRIC" id="fig|288681.22.peg.5342"/>
<dbReference type="UniPathway" id="UPA00074">
    <property type="reaction ID" value="UER00128"/>
</dbReference>
<dbReference type="Proteomes" id="UP000002612">
    <property type="component" value="Chromosome"/>
</dbReference>
<dbReference type="GO" id="GO:0005737">
    <property type="term" value="C:cytoplasm"/>
    <property type="evidence" value="ECO:0007669"/>
    <property type="project" value="UniProtKB-SubCell"/>
</dbReference>
<dbReference type="GO" id="GO:0005524">
    <property type="term" value="F:ATP binding"/>
    <property type="evidence" value="ECO:0007669"/>
    <property type="project" value="UniProtKB-KW"/>
</dbReference>
<dbReference type="GO" id="GO:0004359">
    <property type="term" value="F:glutaminase activity"/>
    <property type="evidence" value="ECO:0007669"/>
    <property type="project" value="UniProtKB-EC"/>
</dbReference>
<dbReference type="GO" id="GO:0004642">
    <property type="term" value="F:phosphoribosylformylglycinamidine synthase activity"/>
    <property type="evidence" value="ECO:0007669"/>
    <property type="project" value="UniProtKB-UniRule"/>
</dbReference>
<dbReference type="GO" id="GO:0006189">
    <property type="term" value="P:'de novo' IMP biosynthetic process"/>
    <property type="evidence" value="ECO:0007669"/>
    <property type="project" value="UniProtKB-UniRule"/>
</dbReference>
<dbReference type="CDD" id="cd01740">
    <property type="entry name" value="GATase1_FGAR_AT"/>
    <property type="match status" value="1"/>
</dbReference>
<dbReference type="FunFam" id="3.40.50.880:FF:000019">
    <property type="entry name" value="Phosphoribosylformylglycinamidine synthase subunit PurQ"/>
    <property type="match status" value="1"/>
</dbReference>
<dbReference type="Gene3D" id="3.40.50.880">
    <property type="match status" value="1"/>
</dbReference>
<dbReference type="HAMAP" id="MF_00421">
    <property type="entry name" value="PurQ"/>
    <property type="match status" value="1"/>
</dbReference>
<dbReference type="InterPro" id="IPR029062">
    <property type="entry name" value="Class_I_gatase-like"/>
</dbReference>
<dbReference type="InterPro" id="IPR010075">
    <property type="entry name" value="PRibForGlyAmidine_synth_PurQ"/>
</dbReference>
<dbReference type="NCBIfam" id="TIGR01737">
    <property type="entry name" value="FGAM_synth_I"/>
    <property type="match status" value="1"/>
</dbReference>
<dbReference type="NCBIfam" id="NF002957">
    <property type="entry name" value="PRK03619.1"/>
    <property type="match status" value="1"/>
</dbReference>
<dbReference type="PANTHER" id="PTHR47552">
    <property type="entry name" value="PHOSPHORIBOSYLFORMYLGLYCINAMIDINE SYNTHASE SUBUNIT PURQ"/>
    <property type="match status" value="1"/>
</dbReference>
<dbReference type="PANTHER" id="PTHR47552:SF1">
    <property type="entry name" value="PHOSPHORIBOSYLFORMYLGLYCINAMIDINE SYNTHASE SUBUNIT PURQ"/>
    <property type="match status" value="1"/>
</dbReference>
<dbReference type="Pfam" id="PF13507">
    <property type="entry name" value="GATase_5"/>
    <property type="match status" value="1"/>
</dbReference>
<dbReference type="PIRSF" id="PIRSF001586">
    <property type="entry name" value="FGAM_synth_I"/>
    <property type="match status" value="1"/>
</dbReference>
<dbReference type="SMART" id="SM01211">
    <property type="entry name" value="GATase_5"/>
    <property type="match status" value="1"/>
</dbReference>
<dbReference type="SUPFAM" id="SSF52317">
    <property type="entry name" value="Class I glutamine amidotransferase-like"/>
    <property type="match status" value="1"/>
</dbReference>
<dbReference type="PROSITE" id="PS51273">
    <property type="entry name" value="GATASE_TYPE_1"/>
    <property type="match status" value="1"/>
</dbReference>
<evidence type="ECO:0000255" key="1">
    <source>
        <dbReference type="HAMAP-Rule" id="MF_00421"/>
    </source>
</evidence>
<organism>
    <name type="scientific">Bacillus cereus (strain ZK / E33L)</name>
    <dbReference type="NCBI Taxonomy" id="288681"/>
    <lineage>
        <taxon>Bacteria</taxon>
        <taxon>Bacillati</taxon>
        <taxon>Bacillota</taxon>
        <taxon>Bacilli</taxon>
        <taxon>Bacillales</taxon>
        <taxon>Bacillaceae</taxon>
        <taxon>Bacillus</taxon>
        <taxon>Bacillus cereus group</taxon>
    </lineage>
</organism>
<keyword id="KW-0067">ATP-binding</keyword>
<keyword id="KW-0963">Cytoplasm</keyword>
<keyword id="KW-0315">Glutamine amidotransferase</keyword>
<keyword id="KW-0378">Hydrolase</keyword>
<keyword id="KW-0436">Ligase</keyword>
<keyword id="KW-0547">Nucleotide-binding</keyword>
<keyword id="KW-0658">Purine biosynthesis</keyword>
<comment type="function">
    <text evidence="1">Part of the phosphoribosylformylglycinamidine synthase complex involved in the purines biosynthetic pathway. Catalyzes the ATP-dependent conversion of formylglycinamide ribonucleotide (FGAR) and glutamine to yield formylglycinamidine ribonucleotide (FGAM) and glutamate. The FGAM synthase complex is composed of three subunits. PurQ produces an ammonia molecule by converting glutamine to glutamate. PurL transfers the ammonia molecule to FGAR to form FGAM in an ATP-dependent manner. PurS interacts with PurQ and PurL and is thought to assist in the transfer of the ammonia molecule from PurQ to PurL.</text>
</comment>
<comment type="catalytic activity">
    <reaction evidence="1">
        <text>N(2)-formyl-N(1)-(5-phospho-beta-D-ribosyl)glycinamide + L-glutamine + ATP + H2O = 2-formamido-N(1)-(5-O-phospho-beta-D-ribosyl)acetamidine + L-glutamate + ADP + phosphate + H(+)</text>
        <dbReference type="Rhea" id="RHEA:17129"/>
        <dbReference type="ChEBI" id="CHEBI:15377"/>
        <dbReference type="ChEBI" id="CHEBI:15378"/>
        <dbReference type="ChEBI" id="CHEBI:29985"/>
        <dbReference type="ChEBI" id="CHEBI:30616"/>
        <dbReference type="ChEBI" id="CHEBI:43474"/>
        <dbReference type="ChEBI" id="CHEBI:58359"/>
        <dbReference type="ChEBI" id="CHEBI:147286"/>
        <dbReference type="ChEBI" id="CHEBI:147287"/>
        <dbReference type="ChEBI" id="CHEBI:456216"/>
        <dbReference type="EC" id="6.3.5.3"/>
    </reaction>
</comment>
<comment type="catalytic activity">
    <reaction evidence="1">
        <text>L-glutamine + H2O = L-glutamate + NH4(+)</text>
        <dbReference type="Rhea" id="RHEA:15889"/>
        <dbReference type="ChEBI" id="CHEBI:15377"/>
        <dbReference type="ChEBI" id="CHEBI:28938"/>
        <dbReference type="ChEBI" id="CHEBI:29985"/>
        <dbReference type="ChEBI" id="CHEBI:58359"/>
        <dbReference type="EC" id="3.5.1.2"/>
    </reaction>
</comment>
<comment type="pathway">
    <text evidence="1">Purine metabolism; IMP biosynthesis via de novo pathway; 5-amino-1-(5-phospho-D-ribosyl)imidazole from N(2)-formyl-N(1)-(5-phospho-D-ribosyl)glycinamide: step 1/2.</text>
</comment>
<comment type="subunit">
    <text evidence="1">Part of the FGAM synthase complex composed of 1 PurL, 1 PurQ and 2 PurS subunits.</text>
</comment>
<comment type="subcellular location">
    <subcellularLocation>
        <location evidence="1">Cytoplasm</location>
    </subcellularLocation>
</comment>